<gene>
    <name evidence="1" type="primary">rpmD</name>
    <name type="ordered locus">AnaeK_1951</name>
</gene>
<comment type="subunit">
    <text evidence="1">Part of the 50S ribosomal subunit.</text>
</comment>
<comment type="similarity">
    <text evidence="1">Belongs to the universal ribosomal protein uL30 family.</text>
</comment>
<keyword id="KW-0687">Ribonucleoprotein</keyword>
<keyword id="KW-0689">Ribosomal protein</keyword>
<evidence type="ECO:0000255" key="1">
    <source>
        <dbReference type="HAMAP-Rule" id="MF_01371"/>
    </source>
</evidence>
<evidence type="ECO:0000305" key="2"/>
<accession>B4UBB7</accession>
<dbReference type="EMBL" id="CP001131">
    <property type="protein sequence ID" value="ACG73179.1"/>
    <property type="molecule type" value="Genomic_DNA"/>
</dbReference>
<dbReference type="RefSeq" id="WP_011420982.1">
    <property type="nucleotide sequence ID" value="NC_011145.1"/>
</dbReference>
<dbReference type="SMR" id="B4UBB7"/>
<dbReference type="KEGG" id="ank:AnaeK_1951"/>
<dbReference type="HOGENOM" id="CLU_131047_2_1_7"/>
<dbReference type="OrthoDB" id="9812790at2"/>
<dbReference type="Proteomes" id="UP000001871">
    <property type="component" value="Chromosome"/>
</dbReference>
<dbReference type="GO" id="GO:0015934">
    <property type="term" value="C:large ribosomal subunit"/>
    <property type="evidence" value="ECO:0007669"/>
    <property type="project" value="InterPro"/>
</dbReference>
<dbReference type="GO" id="GO:0003735">
    <property type="term" value="F:structural constituent of ribosome"/>
    <property type="evidence" value="ECO:0007669"/>
    <property type="project" value="InterPro"/>
</dbReference>
<dbReference type="GO" id="GO:0006412">
    <property type="term" value="P:translation"/>
    <property type="evidence" value="ECO:0007669"/>
    <property type="project" value="InterPro"/>
</dbReference>
<dbReference type="CDD" id="cd01658">
    <property type="entry name" value="Ribosomal_L30"/>
    <property type="match status" value="1"/>
</dbReference>
<dbReference type="Gene3D" id="3.30.1390.20">
    <property type="entry name" value="Ribosomal protein L30, ferredoxin-like fold domain"/>
    <property type="match status" value="1"/>
</dbReference>
<dbReference type="HAMAP" id="MF_01371_B">
    <property type="entry name" value="Ribosomal_uL30_B"/>
    <property type="match status" value="1"/>
</dbReference>
<dbReference type="InterPro" id="IPR036919">
    <property type="entry name" value="Ribo_uL30_ferredoxin-like_sf"/>
</dbReference>
<dbReference type="InterPro" id="IPR005996">
    <property type="entry name" value="Ribosomal_uL30_bac-type"/>
</dbReference>
<dbReference type="InterPro" id="IPR016082">
    <property type="entry name" value="Ribosomal_uL30_ferredoxin-like"/>
</dbReference>
<dbReference type="NCBIfam" id="TIGR01308">
    <property type="entry name" value="rpmD_bact"/>
    <property type="match status" value="1"/>
</dbReference>
<dbReference type="Pfam" id="PF00327">
    <property type="entry name" value="Ribosomal_L30"/>
    <property type="match status" value="1"/>
</dbReference>
<dbReference type="SUPFAM" id="SSF55129">
    <property type="entry name" value="Ribosomal protein L30p/L7e"/>
    <property type="match status" value="1"/>
</dbReference>
<name>RL30_ANASK</name>
<organism>
    <name type="scientific">Anaeromyxobacter sp. (strain K)</name>
    <dbReference type="NCBI Taxonomy" id="447217"/>
    <lineage>
        <taxon>Bacteria</taxon>
        <taxon>Pseudomonadati</taxon>
        <taxon>Myxococcota</taxon>
        <taxon>Myxococcia</taxon>
        <taxon>Myxococcales</taxon>
        <taxon>Cystobacterineae</taxon>
        <taxon>Anaeromyxobacteraceae</taxon>
        <taxon>Anaeromyxobacter</taxon>
    </lineage>
</organism>
<reference key="1">
    <citation type="submission" date="2008-08" db="EMBL/GenBank/DDBJ databases">
        <title>Complete sequence of Anaeromyxobacter sp. K.</title>
        <authorList>
            <consortium name="US DOE Joint Genome Institute"/>
            <person name="Lucas S."/>
            <person name="Copeland A."/>
            <person name="Lapidus A."/>
            <person name="Glavina del Rio T."/>
            <person name="Dalin E."/>
            <person name="Tice H."/>
            <person name="Bruce D."/>
            <person name="Goodwin L."/>
            <person name="Pitluck S."/>
            <person name="Saunders E."/>
            <person name="Brettin T."/>
            <person name="Detter J.C."/>
            <person name="Han C."/>
            <person name="Larimer F."/>
            <person name="Land M."/>
            <person name="Hauser L."/>
            <person name="Kyrpides N."/>
            <person name="Ovchinnikiva G."/>
            <person name="Beliaev A."/>
        </authorList>
    </citation>
    <scope>NUCLEOTIDE SEQUENCE [LARGE SCALE GENOMIC DNA]</scope>
    <source>
        <strain>K</strain>
    </source>
</reference>
<proteinExistence type="inferred from homology"/>
<protein>
    <recommendedName>
        <fullName evidence="1">Large ribosomal subunit protein uL30</fullName>
    </recommendedName>
    <alternativeName>
        <fullName evidence="2">50S ribosomal protein L30</fullName>
    </alternativeName>
</protein>
<feature type="chain" id="PRO_1000144646" description="Large ribosomal subunit protein uL30">
    <location>
        <begin position="1"/>
        <end position="76"/>
    </location>
</feature>
<sequence>MAAIKVKLVRGLAGCPWPHRVIVEGLGLKKRESTKLLPDTPQTLGMIAKVSYLVEWERVDAAPPPGRKARKAAARS</sequence>